<dbReference type="EMBL" id="CP000817">
    <property type="protein sequence ID" value="ACA39226.1"/>
    <property type="molecule type" value="Genomic_DNA"/>
</dbReference>
<dbReference type="RefSeq" id="WP_012293330.1">
    <property type="nucleotide sequence ID" value="NC_010382.1"/>
</dbReference>
<dbReference type="SMR" id="B1HR35"/>
<dbReference type="EnsemblBacteria" id="ACA39226">
    <property type="protein sequence ID" value="ACA39226"/>
    <property type="gene ID" value="Bsph_1628"/>
</dbReference>
<dbReference type="KEGG" id="lsp:Bsph_1628"/>
<dbReference type="HOGENOM" id="CLU_030805_9_3_9"/>
<dbReference type="Proteomes" id="UP000002164">
    <property type="component" value="Chromosome"/>
</dbReference>
<dbReference type="CDD" id="cd00885">
    <property type="entry name" value="cinA"/>
    <property type="match status" value="1"/>
</dbReference>
<dbReference type="Gene3D" id="3.30.70.2860">
    <property type="match status" value="1"/>
</dbReference>
<dbReference type="Gene3D" id="3.90.950.20">
    <property type="entry name" value="CinA-like"/>
    <property type="match status" value="1"/>
</dbReference>
<dbReference type="Gene3D" id="3.40.980.10">
    <property type="entry name" value="MoaB/Mog-like domain"/>
    <property type="match status" value="1"/>
</dbReference>
<dbReference type="HAMAP" id="MF_00226_B">
    <property type="entry name" value="CinA_B"/>
    <property type="match status" value="1"/>
</dbReference>
<dbReference type="InterPro" id="IPR050101">
    <property type="entry name" value="CinA"/>
</dbReference>
<dbReference type="InterPro" id="IPR036653">
    <property type="entry name" value="CinA-like_C"/>
</dbReference>
<dbReference type="InterPro" id="IPR008136">
    <property type="entry name" value="CinA_C"/>
</dbReference>
<dbReference type="InterPro" id="IPR041424">
    <property type="entry name" value="CinA_KH"/>
</dbReference>
<dbReference type="InterPro" id="IPR008135">
    <property type="entry name" value="Competence-induced_CinA"/>
</dbReference>
<dbReference type="InterPro" id="IPR036425">
    <property type="entry name" value="MoaB/Mog-like_dom_sf"/>
</dbReference>
<dbReference type="InterPro" id="IPR001453">
    <property type="entry name" value="MoaB/Mog_dom"/>
</dbReference>
<dbReference type="NCBIfam" id="TIGR00200">
    <property type="entry name" value="cinA_nterm"/>
    <property type="match status" value="1"/>
</dbReference>
<dbReference type="NCBIfam" id="TIGR00177">
    <property type="entry name" value="molyb_syn"/>
    <property type="match status" value="1"/>
</dbReference>
<dbReference type="NCBIfam" id="TIGR00199">
    <property type="entry name" value="PncC_domain"/>
    <property type="match status" value="1"/>
</dbReference>
<dbReference type="NCBIfam" id="NF001813">
    <property type="entry name" value="PRK00549.1"/>
    <property type="match status" value="1"/>
</dbReference>
<dbReference type="PANTHER" id="PTHR13939">
    <property type="entry name" value="NICOTINAMIDE-NUCLEOTIDE AMIDOHYDROLASE PNCC"/>
    <property type="match status" value="1"/>
</dbReference>
<dbReference type="PANTHER" id="PTHR13939:SF0">
    <property type="entry name" value="NMN AMIDOHYDROLASE-LIKE PROTEIN YFAY"/>
    <property type="match status" value="1"/>
</dbReference>
<dbReference type="Pfam" id="PF02464">
    <property type="entry name" value="CinA"/>
    <property type="match status" value="1"/>
</dbReference>
<dbReference type="Pfam" id="PF18146">
    <property type="entry name" value="CinA_KH"/>
    <property type="match status" value="1"/>
</dbReference>
<dbReference type="Pfam" id="PF00994">
    <property type="entry name" value="MoCF_biosynth"/>
    <property type="match status" value="1"/>
</dbReference>
<dbReference type="PIRSF" id="PIRSF006728">
    <property type="entry name" value="CinA"/>
    <property type="match status" value="1"/>
</dbReference>
<dbReference type="SMART" id="SM00852">
    <property type="entry name" value="MoCF_biosynth"/>
    <property type="match status" value="1"/>
</dbReference>
<dbReference type="SUPFAM" id="SSF142433">
    <property type="entry name" value="CinA-like"/>
    <property type="match status" value="1"/>
</dbReference>
<dbReference type="SUPFAM" id="SSF53218">
    <property type="entry name" value="Molybdenum cofactor biosynthesis proteins"/>
    <property type="match status" value="1"/>
</dbReference>
<evidence type="ECO:0000255" key="1">
    <source>
        <dbReference type="HAMAP-Rule" id="MF_00226"/>
    </source>
</evidence>
<comment type="similarity">
    <text evidence="1">Belongs to the CinA family.</text>
</comment>
<sequence length="419" mass="45349">MNAEILAVGSELLLGQITNTNARFISNQLSELGINVFYHTVVGDNAKRLEQAIEVAESRADLIIFSGGLGPTKDDLTKETIARHLGVSLEFDEVALTYIEQFFAKRGRPMTENNRKQALILAGSEILANHHGMAPGMIFNNNNHTYILLPGPPKELEPMFQFEAKPKLAAMLNDGGIIASHVMRFYGIGEAELEVQVQDILDAQTNPTVAPLASDGEVTLRVTAKAETEQQAQQLIAAKVAEIQALVGDYQYGMDDDSLASKTVEMLLDNHLTISAAESLTAGLFQSELAEIPGVGDALIGGVVTYAAEAKVKHLGISQELIDTHGVVSGECAAAMASAVRKQFGTNIGIGLTGEAGPTAHDHQPVGTVWIGIAINDEEPLTYLLHLSGMRNTNRLRAVKFTCHYLMQLLEERGYTKRY</sequence>
<gene>
    <name evidence="1" type="primary">cinA</name>
    <name type="ordered locus">Bsph_1628</name>
</gene>
<reference key="1">
    <citation type="journal article" date="2008" name="J. Bacteriol.">
        <title>Complete genome sequence of the mosquitocidal bacterium Bacillus sphaericus C3-41 and comparison with those of closely related Bacillus species.</title>
        <authorList>
            <person name="Hu X."/>
            <person name="Fan W."/>
            <person name="Han B."/>
            <person name="Liu H."/>
            <person name="Zheng D."/>
            <person name="Li Q."/>
            <person name="Dong W."/>
            <person name="Yan J."/>
            <person name="Gao M."/>
            <person name="Berry C."/>
            <person name="Yuan Z."/>
        </authorList>
    </citation>
    <scope>NUCLEOTIDE SEQUENCE [LARGE SCALE GENOMIC DNA]</scope>
    <source>
        <strain>C3-41</strain>
    </source>
</reference>
<name>CINA_LYSSC</name>
<proteinExistence type="inferred from homology"/>
<organism>
    <name type="scientific">Lysinibacillus sphaericus (strain C3-41)</name>
    <dbReference type="NCBI Taxonomy" id="444177"/>
    <lineage>
        <taxon>Bacteria</taxon>
        <taxon>Bacillati</taxon>
        <taxon>Bacillota</taxon>
        <taxon>Bacilli</taxon>
        <taxon>Bacillales</taxon>
        <taxon>Bacillaceae</taxon>
        <taxon>Lysinibacillus</taxon>
    </lineage>
</organism>
<protein>
    <recommendedName>
        <fullName evidence="1">Putative competence-damage inducible protein</fullName>
    </recommendedName>
</protein>
<feature type="chain" id="PRO_1000100328" description="Putative competence-damage inducible protein">
    <location>
        <begin position="1"/>
        <end position="419"/>
    </location>
</feature>
<accession>B1HR35</accession>